<evidence type="ECO:0000255" key="1">
    <source>
        <dbReference type="HAMAP-Rule" id="MF_01189"/>
    </source>
</evidence>
<evidence type="ECO:0000305" key="2"/>
<proteinExistence type="inferred from homology"/>
<feature type="chain" id="PRO_0000294120" description="Purine ribonucleoside efflux pump NepI">
    <location>
        <begin position="1"/>
        <end position="396"/>
    </location>
</feature>
<feature type="topological domain" description="Cytoplasmic" evidence="1">
    <location>
        <begin position="1"/>
        <end position="21"/>
    </location>
</feature>
<feature type="transmembrane region" description="Helical" evidence="1">
    <location>
        <begin position="22"/>
        <end position="42"/>
    </location>
</feature>
<feature type="topological domain" description="Periplasmic" evidence="1">
    <location>
        <begin position="43"/>
        <end position="54"/>
    </location>
</feature>
<feature type="transmembrane region" description="Helical" evidence="1">
    <location>
        <begin position="55"/>
        <end position="75"/>
    </location>
</feature>
<feature type="topological domain" description="Cytoplasmic" evidence="1">
    <location>
        <begin position="76"/>
        <end position="85"/>
    </location>
</feature>
<feature type="transmembrane region" description="Helical" evidence="1">
    <location>
        <begin position="86"/>
        <end position="106"/>
    </location>
</feature>
<feature type="topological domain" description="Periplasmic" evidence="1">
    <location>
        <position position="107"/>
    </location>
</feature>
<feature type="transmembrane region" description="Helical" evidence="1">
    <location>
        <begin position="108"/>
        <end position="128"/>
    </location>
</feature>
<feature type="topological domain" description="Cytoplasmic" evidence="1">
    <location>
        <begin position="129"/>
        <end position="147"/>
    </location>
</feature>
<feature type="transmembrane region" description="Helical" evidence="1">
    <location>
        <begin position="148"/>
        <end position="168"/>
    </location>
</feature>
<feature type="topological domain" description="Periplasmic" evidence="1">
    <location>
        <begin position="169"/>
        <end position="175"/>
    </location>
</feature>
<feature type="transmembrane region" description="Helical" evidence="1">
    <location>
        <begin position="176"/>
        <end position="196"/>
    </location>
</feature>
<feature type="topological domain" description="Cytoplasmic" evidence="1">
    <location>
        <begin position="197"/>
        <end position="215"/>
    </location>
</feature>
<feature type="transmembrane region" description="Helical" evidence="1">
    <location>
        <begin position="216"/>
        <end position="236"/>
    </location>
</feature>
<feature type="topological domain" description="Periplasmic" evidence="1">
    <location>
        <begin position="237"/>
        <end position="255"/>
    </location>
</feature>
<feature type="transmembrane region" description="Helical" evidence="1">
    <location>
        <begin position="256"/>
        <end position="276"/>
    </location>
</feature>
<feature type="topological domain" description="Cytoplasmic" evidence="1">
    <location>
        <begin position="277"/>
        <end position="281"/>
    </location>
</feature>
<feature type="transmembrane region" description="Helical" evidence="1">
    <location>
        <begin position="282"/>
        <end position="302"/>
    </location>
</feature>
<feature type="topological domain" description="Periplasmic" evidence="1">
    <location>
        <begin position="303"/>
        <end position="305"/>
    </location>
</feature>
<feature type="transmembrane region" description="Helical" evidence="1">
    <location>
        <begin position="306"/>
        <end position="326"/>
    </location>
</feature>
<feature type="topological domain" description="Cytoplasmic" evidence="1">
    <location>
        <begin position="327"/>
        <end position="343"/>
    </location>
</feature>
<feature type="transmembrane region" description="Helical" evidence="1">
    <location>
        <begin position="344"/>
        <end position="364"/>
    </location>
</feature>
<feature type="topological domain" description="Periplasmic" evidence="1">
    <location>
        <begin position="365"/>
        <end position="366"/>
    </location>
</feature>
<feature type="transmembrane region" description="Helical" evidence="1">
    <location>
        <begin position="367"/>
        <end position="387"/>
    </location>
</feature>
<feature type="topological domain" description="Cytoplasmic" evidence="1">
    <location>
        <begin position="388"/>
        <end position="396"/>
    </location>
</feature>
<keyword id="KW-0050">Antiport</keyword>
<keyword id="KW-0997">Cell inner membrane</keyword>
<keyword id="KW-1003">Cell membrane</keyword>
<keyword id="KW-0472">Membrane</keyword>
<keyword id="KW-1185">Reference proteome</keyword>
<keyword id="KW-0812">Transmembrane</keyword>
<keyword id="KW-1133">Transmembrane helix</keyword>
<keyword id="KW-0813">Transport</keyword>
<sequence length="396" mass="41857">MSEFIAENRGADAITRPNWSAVFSVAFCVACLIIVEFLPVSLLTPMAQDLGISEGVAGQSVTVTAFVAMFASLFITQTIQATDRRNVVILFAVLLTLSCLLVSFANSFSLLLIGRACLGLALGGFWAMSASLTMRLVPPRTVPKALSVIFGAVSIALVIAAPLGSFLGELIGWRNVFNAAAVMGVLCIFWIIKSLPSLPGEPSHQKQNTFRLLQRPGVMAGMIAIFMSFAGQFAFFTYIRPVYMNLAGFSVDGLTLVLLSFGIASFIGTSLSSFILKRSVKLALAGAPLILAVSALVLTLWGSDKIVATGVAIIWGLTFALVPVGWSTWITRSLADQAEKAGSIQVAVIQLANTCGAAIGGYALDNIGLTSPLMFSGTLMLLTALLVTAKVKMKKS</sequence>
<comment type="function">
    <text evidence="1">Involved in the efflux of purine ribonucleosides, such as inosine and guanosine.</text>
</comment>
<comment type="catalytic activity">
    <reaction evidence="1">
        <text>inosine(in) + H(+)(out) = inosine(out) + H(+)(in)</text>
        <dbReference type="Rhea" id="RHEA:29211"/>
        <dbReference type="ChEBI" id="CHEBI:15378"/>
        <dbReference type="ChEBI" id="CHEBI:17596"/>
    </reaction>
    <physiologicalReaction direction="left-to-right" evidence="1">
        <dbReference type="Rhea" id="RHEA:29212"/>
    </physiologicalReaction>
</comment>
<comment type="catalytic activity">
    <reaction evidence="1">
        <text>guanosine(in) + H(+)(out) = guanosine(out) + H(+)(in)</text>
        <dbReference type="Rhea" id="RHEA:29583"/>
        <dbReference type="ChEBI" id="CHEBI:15378"/>
        <dbReference type="ChEBI" id="CHEBI:16750"/>
    </reaction>
    <physiologicalReaction direction="left-to-right" evidence="1">
        <dbReference type="Rhea" id="RHEA:29584"/>
    </physiologicalReaction>
</comment>
<comment type="subcellular location">
    <subcellularLocation>
        <location evidence="1">Cell inner membrane</location>
        <topology evidence="1">Multi-pass membrane protein</topology>
    </subcellularLocation>
</comment>
<comment type="similarity">
    <text evidence="1">Belongs to the major facilitator superfamily. DHA1 family. NepI (TC 2.A.1.2.26) subfamily.</text>
</comment>
<comment type="sequence caution" evidence="2">
    <conflict type="frameshift">
        <sequence resource="EMBL-CDS" id="AAZ90166"/>
    </conflict>
</comment>
<organism>
    <name type="scientific">Shigella sonnei (strain Ss046)</name>
    <dbReference type="NCBI Taxonomy" id="300269"/>
    <lineage>
        <taxon>Bacteria</taxon>
        <taxon>Pseudomonadati</taxon>
        <taxon>Pseudomonadota</taxon>
        <taxon>Gammaproteobacteria</taxon>
        <taxon>Enterobacterales</taxon>
        <taxon>Enterobacteriaceae</taxon>
        <taxon>Shigella</taxon>
    </lineage>
</organism>
<protein>
    <recommendedName>
        <fullName evidence="1">Purine ribonucleoside efflux pump NepI</fullName>
    </recommendedName>
</protein>
<accession>Q3YWE6</accession>
<reference key="1">
    <citation type="journal article" date="2005" name="Nucleic Acids Res.">
        <title>Genome dynamics and diversity of Shigella species, the etiologic agents of bacillary dysentery.</title>
        <authorList>
            <person name="Yang F."/>
            <person name="Yang J."/>
            <person name="Zhang X."/>
            <person name="Chen L."/>
            <person name="Jiang Y."/>
            <person name="Yan Y."/>
            <person name="Tang X."/>
            <person name="Wang J."/>
            <person name="Xiong Z."/>
            <person name="Dong J."/>
            <person name="Xue Y."/>
            <person name="Zhu Y."/>
            <person name="Xu X."/>
            <person name="Sun L."/>
            <person name="Chen S."/>
            <person name="Nie H."/>
            <person name="Peng J."/>
            <person name="Xu J."/>
            <person name="Wang Y."/>
            <person name="Yuan Z."/>
            <person name="Wen Y."/>
            <person name="Yao Z."/>
            <person name="Shen Y."/>
            <person name="Qiang B."/>
            <person name="Hou Y."/>
            <person name="Yu J."/>
            <person name="Jin Q."/>
        </authorList>
    </citation>
    <scope>NUCLEOTIDE SEQUENCE [LARGE SCALE GENOMIC DNA]</scope>
    <source>
        <strain>Ss046</strain>
    </source>
</reference>
<gene>
    <name evidence="1" type="primary">nepI</name>
    <name type="ordered locus">SSON_3615</name>
</gene>
<name>NEPI_SHISS</name>
<dbReference type="EMBL" id="CP000038">
    <property type="protein sequence ID" value="AAZ90166.1"/>
    <property type="status" value="ALT_FRAME"/>
    <property type="molecule type" value="Genomic_DNA"/>
</dbReference>
<dbReference type="SMR" id="Q3YWE6"/>
<dbReference type="KEGG" id="ssn:SSON_3615"/>
<dbReference type="HOGENOM" id="CLU_001265_61_1_6"/>
<dbReference type="Proteomes" id="UP000002529">
    <property type="component" value="Chromosome"/>
</dbReference>
<dbReference type="GO" id="GO:0005886">
    <property type="term" value="C:plasma membrane"/>
    <property type="evidence" value="ECO:0007669"/>
    <property type="project" value="UniProtKB-SubCell"/>
</dbReference>
<dbReference type="GO" id="GO:0015297">
    <property type="term" value="F:antiporter activity"/>
    <property type="evidence" value="ECO:0007669"/>
    <property type="project" value="UniProtKB-KW"/>
</dbReference>
<dbReference type="GO" id="GO:0015211">
    <property type="term" value="F:purine nucleoside transmembrane transporter activity"/>
    <property type="evidence" value="ECO:0007669"/>
    <property type="project" value="UniProtKB-UniRule"/>
</dbReference>
<dbReference type="CDD" id="cd17324">
    <property type="entry name" value="MFS_NepI_like"/>
    <property type="match status" value="1"/>
</dbReference>
<dbReference type="FunFam" id="1.20.1250.20:FF:000113">
    <property type="entry name" value="Purine ribonucleoside efflux pump NepI"/>
    <property type="match status" value="1"/>
</dbReference>
<dbReference type="Gene3D" id="1.20.1250.20">
    <property type="entry name" value="MFS general substrate transporter like domains"/>
    <property type="match status" value="1"/>
</dbReference>
<dbReference type="HAMAP" id="MF_01189">
    <property type="entry name" value="MFS_NepI"/>
    <property type="match status" value="1"/>
</dbReference>
<dbReference type="InterPro" id="IPR011701">
    <property type="entry name" value="MFS"/>
</dbReference>
<dbReference type="InterPro" id="IPR020846">
    <property type="entry name" value="MFS_dom"/>
</dbReference>
<dbReference type="InterPro" id="IPR050189">
    <property type="entry name" value="MFS_Efflux_Transporters"/>
</dbReference>
<dbReference type="InterPro" id="IPR023680">
    <property type="entry name" value="MFS_NepI"/>
</dbReference>
<dbReference type="InterPro" id="IPR036259">
    <property type="entry name" value="MFS_trans_sf"/>
</dbReference>
<dbReference type="NCBIfam" id="NF007578">
    <property type="entry name" value="PRK10213.1"/>
    <property type="match status" value="1"/>
</dbReference>
<dbReference type="PANTHER" id="PTHR43124">
    <property type="entry name" value="PURINE EFFLUX PUMP PBUE"/>
    <property type="match status" value="1"/>
</dbReference>
<dbReference type="PANTHER" id="PTHR43124:SF5">
    <property type="entry name" value="PURINE RIBONUCLEOSIDE EFFLUX PUMP NEPI"/>
    <property type="match status" value="1"/>
</dbReference>
<dbReference type="Pfam" id="PF07690">
    <property type="entry name" value="MFS_1"/>
    <property type="match status" value="1"/>
</dbReference>
<dbReference type="SUPFAM" id="SSF103473">
    <property type="entry name" value="MFS general substrate transporter"/>
    <property type="match status" value="1"/>
</dbReference>
<dbReference type="PROSITE" id="PS50850">
    <property type="entry name" value="MFS"/>
    <property type="match status" value="1"/>
</dbReference>